<proteinExistence type="inferred from homology"/>
<comment type="catalytic activity">
    <reaction evidence="1">
        <text>tRNA(His) + L-histidine + ATP = L-histidyl-tRNA(His) + AMP + diphosphate + H(+)</text>
        <dbReference type="Rhea" id="RHEA:17313"/>
        <dbReference type="Rhea" id="RHEA-COMP:9665"/>
        <dbReference type="Rhea" id="RHEA-COMP:9689"/>
        <dbReference type="ChEBI" id="CHEBI:15378"/>
        <dbReference type="ChEBI" id="CHEBI:30616"/>
        <dbReference type="ChEBI" id="CHEBI:33019"/>
        <dbReference type="ChEBI" id="CHEBI:57595"/>
        <dbReference type="ChEBI" id="CHEBI:78442"/>
        <dbReference type="ChEBI" id="CHEBI:78527"/>
        <dbReference type="ChEBI" id="CHEBI:456215"/>
        <dbReference type="EC" id="6.1.1.21"/>
    </reaction>
</comment>
<comment type="subunit">
    <text evidence="1">Homodimer.</text>
</comment>
<comment type="subcellular location">
    <subcellularLocation>
        <location evidence="1">Cytoplasm</location>
    </subcellularLocation>
</comment>
<comment type="similarity">
    <text evidence="1">Belongs to the class-II aminoacyl-tRNA synthetase family.</text>
</comment>
<organism>
    <name type="scientific">Acinetobacter baumannii (strain ATCC 17978 / DSM 105126 / CIP 53.77 / LMG 1025 / NCDC KC755 / 5377)</name>
    <dbReference type="NCBI Taxonomy" id="400667"/>
    <lineage>
        <taxon>Bacteria</taxon>
        <taxon>Pseudomonadati</taxon>
        <taxon>Pseudomonadota</taxon>
        <taxon>Gammaproteobacteria</taxon>
        <taxon>Moraxellales</taxon>
        <taxon>Moraxellaceae</taxon>
        <taxon>Acinetobacter</taxon>
        <taxon>Acinetobacter calcoaceticus/baumannii complex</taxon>
    </lineage>
</organism>
<sequence>MSSIVAIKGFNDVLPTQTAAWRRLEQHLASLMDAYGYQQIRLPIVEQTGLFKRAIGDATDIVEKEMYTFFDKGNPPESLTLRPEGTAGCVRALVEHNLLRGATPRVWYMGPMFRYEKPQKGRYRQFHQFGVETFGVATPDIEAEVILMTARLWKRMGVAHMVQLELNTLGEKEERTEYRNALVAFLNEHKDALDEDSQRRLTTNPLRILDSKIESTQKILENAPKLYDFLKEDSLSHFQQLQDYLTAAGIKFVINQKLVRGLDYYNKTVFEWTTTALGSQGTVCGGGRYDGLVGQLKGKADQSVPAVGFGMGMERLLLLIEQVEQAEIVRDCEAFLVAEPAYQSKALVLAEQLRDQLEAANSNIRIKTGSQGSMKSQMKKADQAGAVYAIILGEREWEAQQLAIKELATAEQSQVALAELVPFLIEKFTK</sequence>
<keyword id="KW-0030">Aminoacyl-tRNA synthetase</keyword>
<keyword id="KW-0067">ATP-binding</keyword>
<keyword id="KW-0963">Cytoplasm</keyword>
<keyword id="KW-0436">Ligase</keyword>
<keyword id="KW-0547">Nucleotide-binding</keyword>
<keyword id="KW-0648">Protein biosynthesis</keyword>
<feature type="chain" id="PRO_1000095524" description="Histidine--tRNA ligase">
    <location>
        <begin position="1"/>
        <end position="430"/>
    </location>
</feature>
<evidence type="ECO:0000255" key="1">
    <source>
        <dbReference type="HAMAP-Rule" id="MF_00127"/>
    </source>
</evidence>
<reference key="1">
    <citation type="journal article" date="2007" name="Genes Dev.">
        <title>New insights into Acinetobacter baumannii pathogenesis revealed by high-density pyrosequencing and transposon mutagenesis.</title>
        <authorList>
            <person name="Smith M.G."/>
            <person name="Gianoulis T.A."/>
            <person name="Pukatzki S."/>
            <person name="Mekalanos J.J."/>
            <person name="Ornston L.N."/>
            <person name="Gerstein M."/>
            <person name="Snyder M."/>
        </authorList>
    </citation>
    <scope>NUCLEOTIDE SEQUENCE [LARGE SCALE GENOMIC DNA]</scope>
    <source>
        <strain>ATCC 17978 / DSM 105126 / CIP 53.77 / LMG 1025 / NCDC KC755 / 5377</strain>
    </source>
</reference>
<protein>
    <recommendedName>
        <fullName evidence="1">Histidine--tRNA ligase</fullName>
        <ecNumber evidence="1">6.1.1.21</ecNumber>
    </recommendedName>
    <alternativeName>
        <fullName evidence="1">Histidyl-tRNA synthetase</fullName>
        <shortName evidence="1">HisRS</shortName>
    </alternativeName>
</protein>
<dbReference type="EC" id="6.1.1.21" evidence="1"/>
<dbReference type="EMBL" id="CP000521">
    <property type="protein sequence ID" value="ABO10956.2"/>
    <property type="molecule type" value="Genomic_DNA"/>
</dbReference>
<dbReference type="RefSeq" id="WP_000095263.1">
    <property type="nucleotide sequence ID" value="NZ_CP053098.1"/>
</dbReference>
<dbReference type="SMR" id="A3M212"/>
<dbReference type="KEGG" id="acb:A1S_0503"/>
<dbReference type="HOGENOM" id="CLU_025113_1_0_6"/>
<dbReference type="GO" id="GO:0005737">
    <property type="term" value="C:cytoplasm"/>
    <property type="evidence" value="ECO:0007669"/>
    <property type="project" value="UniProtKB-SubCell"/>
</dbReference>
<dbReference type="GO" id="GO:0005524">
    <property type="term" value="F:ATP binding"/>
    <property type="evidence" value="ECO:0007669"/>
    <property type="project" value="UniProtKB-UniRule"/>
</dbReference>
<dbReference type="GO" id="GO:0004821">
    <property type="term" value="F:histidine-tRNA ligase activity"/>
    <property type="evidence" value="ECO:0007669"/>
    <property type="project" value="UniProtKB-UniRule"/>
</dbReference>
<dbReference type="GO" id="GO:0006427">
    <property type="term" value="P:histidyl-tRNA aminoacylation"/>
    <property type="evidence" value="ECO:0007669"/>
    <property type="project" value="UniProtKB-UniRule"/>
</dbReference>
<dbReference type="CDD" id="cd00773">
    <property type="entry name" value="HisRS-like_core"/>
    <property type="match status" value="1"/>
</dbReference>
<dbReference type="FunFam" id="3.30.930.10:FF:000005">
    <property type="entry name" value="Histidine--tRNA ligase"/>
    <property type="match status" value="1"/>
</dbReference>
<dbReference type="Gene3D" id="3.40.50.800">
    <property type="entry name" value="Anticodon-binding domain"/>
    <property type="match status" value="1"/>
</dbReference>
<dbReference type="Gene3D" id="3.30.930.10">
    <property type="entry name" value="Bira Bifunctional Protein, Domain 2"/>
    <property type="match status" value="1"/>
</dbReference>
<dbReference type="HAMAP" id="MF_00127">
    <property type="entry name" value="His_tRNA_synth"/>
    <property type="match status" value="1"/>
</dbReference>
<dbReference type="InterPro" id="IPR006195">
    <property type="entry name" value="aa-tRNA-synth_II"/>
</dbReference>
<dbReference type="InterPro" id="IPR045864">
    <property type="entry name" value="aa-tRNA-synth_II/BPL/LPL"/>
</dbReference>
<dbReference type="InterPro" id="IPR004154">
    <property type="entry name" value="Anticodon-bd"/>
</dbReference>
<dbReference type="InterPro" id="IPR036621">
    <property type="entry name" value="Anticodon-bd_dom_sf"/>
</dbReference>
<dbReference type="InterPro" id="IPR015807">
    <property type="entry name" value="His-tRNA-ligase"/>
</dbReference>
<dbReference type="InterPro" id="IPR041715">
    <property type="entry name" value="HisRS-like_core"/>
</dbReference>
<dbReference type="InterPro" id="IPR004516">
    <property type="entry name" value="HisRS/HisZ"/>
</dbReference>
<dbReference type="NCBIfam" id="TIGR00442">
    <property type="entry name" value="hisS"/>
    <property type="match status" value="1"/>
</dbReference>
<dbReference type="PANTHER" id="PTHR43707:SF1">
    <property type="entry name" value="HISTIDINE--TRNA LIGASE, MITOCHONDRIAL-RELATED"/>
    <property type="match status" value="1"/>
</dbReference>
<dbReference type="PANTHER" id="PTHR43707">
    <property type="entry name" value="HISTIDYL-TRNA SYNTHETASE"/>
    <property type="match status" value="1"/>
</dbReference>
<dbReference type="Pfam" id="PF03129">
    <property type="entry name" value="HGTP_anticodon"/>
    <property type="match status" value="1"/>
</dbReference>
<dbReference type="Pfam" id="PF13393">
    <property type="entry name" value="tRNA-synt_His"/>
    <property type="match status" value="1"/>
</dbReference>
<dbReference type="PIRSF" id="PIRSF001549">
    <property type="entry name" value="His-tRNA_synth"/>
    <property type="match status" value="1"/>
</dbReference>
<dbReference type="SUPFAM" id="SSF52954">
    <property type="entry name" value="Class II aaRS ABD-related"/>
    <property type="match status" value="1"/>
</dbReference>
<dbReference type="SUPFAM" id="SSF55681">
    <property type="entry name" value="Class II aaRS and biotin synthetases"/>
    <property type="match status" value="1"/>
</dbReference>
<dbReference type="PROSITE" id="PS50862">
    <property type="entry name" value="AA_TRNA_LIGASE_II"/>
    <property type="match status" value="1"/>
</dbReference>
<gene>
    <name evidence="1" type="primary">hisS</name>
    <name type="ordered locus">A1S_0503</name>
</gene>
<accession>A3M212</accession>
<name>SYH_ACIBT</name>